<protein>
    <recommendedName>
        <fullName evidence="5">Probable transcription factor FUP6</fullName>
    </recommendedName>
    <alternativeName>
        <fullName evidence="5">Fusaproliferin biosynthesis cluster protein 6</fullName>
    </alternativeName>
</protein>
<reference key="1">
    <citation type="journal article" date="2016" name="Genome Biol. Evol.">
        <title>Comparative 'omics' of the Fusarium fujikuroi species complex highlights differences in genetic potential and metabolite synthesis.</title>
        <authorList>
            <person name="Niehaus E.-M."/>
            <person name="Muensterkoetter M."/>
            <person name="Proctor R.H."/>
            <person name="Brown D.W."/>
            <person name="Sharon A."/>
            <person name="Idan Y."/>
            <person name="Oren-Young L."/>
            <person name="Sieber C.M."/>
            <person name="Novak O."/>
            <person name="Pencik A."/>
            <person name="Tarkowska D."/>
            <person name="Hromadova K."/>
            <person name="Freeman S."/>
            <person name="Maymon M."/>
            <person name="Elazar M."/>
            <person name="Youssef S.A."/>
            <person name="El-Shabrawy E.S.M."/>
            <person name="Shalaby A.B.A."/>
            <person name="Houterman P."/>
            <person name="Brock N.L."/>
            <person name="Burkhardt I."/>
            <person name="Tsavkelova E.A."/>
            <person name="Dickschat J.S."/>
            <person name="Galuszka P."/>
            <person name="Gueldener U."/>
            <person name="Tudzynski B."/>
        </authorList>
    </citation>
    <scope>NUCLEOTIDE SEQUENCE [LARGE SCALE GENOMIC DNA]</scope>
    <source>
        <strain>ET1</strain>
    </source>
</reference>
<reference key="2">
    <citation type="journal article" date="2018" name="Molecules">
        <title>Fusaproliferin, a fungal mycotoxin, shows cytotoxicity against pancreatic cancer cell lines.</title>
        <authorList>
            <person name="Hoque N."/>
            <person name="Hasan C.M."/>
            <person name="Rana M.S."/>
            <person name="Varsha A."/>
            <person name="Sohrab M.H."/>
            <person name="Rahman K.M."/>
        </authorList>
    </citation>
    <scope>BIOTECHNOLOGY</scope>
</reference>
<reference key="3">
    <citation type="journal article" date="2021" name="Toxins">
        <title>Identification and functional characterization of the gene cluster responsible for fusaproliferin biosynthesis in Fusarium proliferatum.</title>
        <authorList>
            <person name="Ceranic A."/>
            <person name="Svoboda T."/>
            <person name="Berthiller F."/>
            <person name="Sulyok M."/>
            <person name="Samson J.M."/>
            <person name="Gueldener U."/>
            <person name="Schuhmacher R."/>
            <person name="Adam G."/>
        </authorList>
    </citation>
    <scope>FUNCTION</scope>
</reference>
<reference key="4">
    <citation type="journal article" date="2022" name="Front. Pharmacol.">
        <title>Investigation of the anti-inflammatory activity of fusaproliferin analogues guided by transcriptome analysis.</title>
        <authorList>
            <person name="Kuang Q.X."/>
            <person name="Lei L.R."/>
            <person name="Li Q.Z."/>
            <person name="Peng W."/>
            <person name="Wang Y.M."/>
            <person name="Dai Y.F."/>
            <person name="Wang D."/>
            <person name="Gu Y.C."/>
            <person name="Deng Y."/>
            <person name="Guo D.L."/>
        </authorList>
    </citation>
    <scope>BIOTECHNOLOGY</scope>
</reference>
<organism>
    <name type="scientific">Fusarium proliferatum (strain ET1)</name>
    <name type="common">Orchid endophyte fungus</name>
    <dbReference type="NCBI Taxonomy" id="1227346"/>
    <lineage>
        <taxon>Eukaryota</taxon>
        <taxon>Fungi</taxon>
        <taxon>Dikarya</taxon>
        <taxon>Ascomycota</taxon>
        <taxon>Pezizomycotina</taxon>
        <taxon>Sordariomycetes</taxon>
        <taxon>Hypocreomycetidae</taxon>
        <taxon>Hypocreales</taxon>
        <taxon>Nectriaceae</taxon>
        <taxon>Fusarium</taxon>
        <taxon>Fusarium fujikuroi species complex</taxon>
    </lineage>
</organism>
<evidence type="ECO:0000256" key="1">
    <source>
        <dbReference type="SAM" id="MobiDB-lite"/>
    </source>
</evidence>
<evidence type="ECO:0000269" key="2">
    <source>
    </source>
</evidence>
<evidence type="ECO:0000269" key="3">
    <source>
    </source>
</evidence>
<evidence type="ECO:0000269" key="4">
    <source>
    </source>
</evidence>
<evidence type="ECO:0000303" key="5">
    <source>
    </source>
</evidence>
<evidence type="ECO:0000305" key="6">
    <source>
    </source>
</evidence>
<sequence>MSRTTSSNTPTLPQAVQERGSLRTLEKGESQFIGSSSGIYFVNTVRRAFINANSRLSSRLLDTAHPTPEECIVADGEDEQQRPDVDASLLPSSFSYGHGIPTGLGRPPQPDVAKQLFMTYFQTWHRFFPFLHGPTILRDMEDLYSSLDENSRASEPIPPRVPTTLPKVVILQCIFNLASLHNSSQLPVASEIQKPTDLLSYLPGLAVKGDLVSIQALFAAGLLLVARMSLRAASVVSGLLSRAVFLAGLHRCPCRYGKLTADECDIRKRLFWCIYVFDRYLSQALGHPLGIQDSDVDVCPLDGPELHHPLLYPTVPSSYSGVASPFSGLSAMSVDATITGRQSEAGLGRATSEDESSQKHNRHSSLSFQVQYSRLLGRALELFHKSLHIRSIDSGSILSLQTDINALWNALPSSLQEFDPSSCDTTDRNQSQVFNESAHFILLHSQLVLLIHRPRLSLEPSTPEFQSAIQICINEAREIIKITSKQINAGYALFWPAYLSVTWMAGIVLAFACQLRLYSAEKGKREIGMCLDVLLHMSERWKLAKNCHAVLSDLAEAIQEMEHTAKRPAFEVSDSTFDSVHSGRDSVSSAMNYQSDSRKRARLDTESNPRSSQRNDGSGQPLNQIPADIVNVSMGEPLGSSFEPLDATDAAIEDDIQYFGDPGRLSSWESGMPDLLAGITWESLLGGINEDDPSWDSAFF</sequence>
<accession>A0A1L7VET2</accession>
<feature type="chain" id="PRO_0000460565" description="Probable transcription factor FUP6">
    <location>
        <begin position="1"/>
        <end position="700"/>
    </location>
</feature>
<feature type="region of interest" description="Disordered" evidence="1">
    <location>
        <begin position="343"/>
        <end position="364"/>
    </location>
</feature>
<feature type="region of interest" description="Disordered" evidence="1">
    <location>
        <begin position="577"/>
        <end position="624"/>
    </location>
</feature>
<feature type="compositionally biased region" description="Polar residues" evidence="1">
    <location>
        <begin position="577"/>
        <end position="595"/>
    </location>
</feature>
<feature type="compositionally biased region" description="Basic and acidic residues" evidence="1">
    <location>
        <begin position="596"/>
        <end position="607"/>
    </location>
</feature>
<feature type="compositionally biased region" description="Polar residues" evidence="1">
    <location>
        <begin position="608"/>
        <end position="623"/>
    </location>
</feature>
<name>FUP6_FUSPR</name>
<comment type="function">
    <text evidence="3">Probable transcrition factor; part of the gene cluster that mediates the biosynthesis of the mycotoxin fusaproliferin (FUP) that belongs to the class of bicyclic sesterterpenoids.</text>
</comment>
<comment type="subcellular location">
    <subcellularLocation>
        <location evidence="6">Nucleus</location>
    </subcellularLocation>
</comment>
<comment type="biotechnology">
    <text evidence="2 4">Fusaproliferin shows cytotoxicity against pancreatic cancer cell lines and provides a new chemical scaffold that can be further developed to obtain more potent synthetic agents against pancreatic cancer (PubMed:30545017). Fusaproliferin and its analogs show also anti-inflammatory activity and can be hit compounds for the treatment of inflammation-associated diseases (PubMed:37124719).</text>
</comment>
<keyword id="KW-0238">DNA-binding</keyword>
<keyword id="KW-0479">Metal-binding</keyword>
<keyword id="KW-0539">Nucleus</keyword>
<keyword id="KW-0804">Transcription</keyword>
<keyword id="KW-0805">Transcription regulation</keyword>
<gene>
    <name evidence="5" type="primary">FUP6</name>
    <name type="ORF">FPRO_05650</name>
</gene>
<dbReference type="EMBL" id="FJOF01000003">
    <property type="protein sequence ID" value="CZR39158.1"/>
    <property type="molecule type" value="Genomic_DNA"/>
</dbReference>
<dbReference type="VEuPathDB" id="FungiDB:FPRO_05650"/>
<dbReference type="Proteomes" id="UP000183971">
    <property type="component" value="Unassembled WGS sequence"/>
</dbReference>
<dbReference type="GO" id="GO:0005634">
    <property type="term" value="C:nucleus"/>
    <property type="evidence" value="ECO:0007669"/>
    <property type="project" value="UniProtKB-SubCell"/>
</dbReference>
<dbReference type="GO" id="GO:0003677">
    <property type="term" value="F:DNA binding"/>
    <property type="evidence" value="ECO:0007669"/>
    <property type="project" value="UniProtKB-KW"/>
</dbReference>
<dbReference type="GO" id="GO:0003700">
    <property type="term" value="F:DNA-binding transcription factor activity"/>
    <property type="evidence" value="ECO:0007669"/>
    <property type="project" value="InterPro"/>
</dbReference>
<dbReference type="GO" id="GO:0008270">
    <property type="term" value="F:zinc ion binding"/>
    <property type="evidence" value="ECO:0007669"/>
    <property type="project" value="InterPro"/>
</dbReference>
<dbReference type="GO" id="GO:0006351">
    <property type="term" value="P:DNA-templated transcription"/>
    <property type="evidence" value="ECO:0007669"/>
    <property type="project" value="InterPro"/>
</dbReference>
<dbReference type="CDD" id="cd12148">
    <property type="entry name" value="fungal_TF_MHR"/>
    <property type="match status" value="1"/>
</dbReference>
<dbReference type="InterPro" id="IPR050987">
    <property type="entry name" value="AtrR-like"/>
</dbReference>
<dbReference type="InterPro" id="IPR007219">
    <property type="entry name" value="Transcription_factor_dom_fun"/>
</dbReference>
<dbReference type="PANTHER" id="PTHR46910:SF9">
    <property type="entry name" value="MISCELLANEOUS ZN(II)2CYS6 TRANSCRIPTION FACTOR (EUROFUNG)"/>
    <property type="match status" value="1"/>
</dbReference>
<dbReference type="PANTHER" id="PTHR46910">
    <property type="entry name" value="TRANSCRIPTION FACTOR PDR1"/>
    <property type="match status" value="1"/>
</dbReference>
<dbReference type="Pfam" id="PF04082">
    <property type="entry name" value="Fungal_trans"/>
    <property type="match status" value="1"/>
</dbReference>
<dbReference type="SMART" id="SM00906">
    <property type="entry name" value="Fungal_trans"/>
    <property type="match status" value="1"/>
</dbReference>
<proteinExistence type="evidence at protein level"/>